<proteinExistence type="inferred from homology"/>
<evidence type="ECO:0000255" key="1">
    <source>
        <dbReference type="HAMAP-Rule" id="MF_00508"/>
    </source>
</evidence>
<evidence type="ECO:0000305" key="2"/>
<reference key="1">
    <citation type="journal article" date="2007" name="J. Bacteriol.">
        <title>Genome of the opportunistic pathogen Streptococcus sanguinis.</title>
        <authorList>
            <person name="Xu P."/>
            <person name="Alves J.M."/>
            <person name="Kitten T."/>
            <person name="Brown A."/>
            <person name="Chen Z."/>
            <person name="Ozaki L.S."/>
            <person name="Manque P."/>
            <person name="Ge X."/>
            <person name="Serrano M.G."/>
            <person name="Puiu D."/>
            <person name="Hendricks S."/>
            <person name="Wang Y."/>
            <person name="Chaplin M.D."/>
            <person name="Akan D."/>
            <person name="Paik S."/>
            <person name="Peterson D.L."/>
            <person name="Macrina F.L."/>
            <person name="Buck G.A."/>
        </authorList>
    </citation>
    <scope>NUCLEOTIDE SEQUENCE [LARGE SCALE GENOMIC DNA]</scope>
    <source>
        <strain>SK36</strain>
    </source>
</reference>
<name>RS10_STRSV</name>
<feature type="chain" id="PRO_1000015124" description="Small ribosomal subunit protein uS10">
    <location>
        <begin position="1"/>
        <end position="102"/>
    </location>
</feature>
<gene>
    <name evidence="1" type="primary">rpsJ</name>
    <name type="ordered locus">SSA_0106</name>
</gene>
<keyword id="KW-1185">Reference proteome</keyword>
<keyword id="KW-0687">Ribonucleoprotein</keyword>
<keyword id="KW-0689">Ribosomal protein</keyword>
<organism>
    <name type="scientific">Streptococcus sanguinis (strain SK36)</name>
    <dbReference type="NCBI Taxonomy" id="388919"/>
    <lineage>
        <taxon>Bacteria</taxon>
        <taxon>Bacillati</taxon>
        <taxon>Bacillota</taxon>
        <taxon>Bacilli</taxon>
        <taxon>Lactobacillales</taxon>
        <taxon>Streptococcaceae</taxon>
        <taxon>Streptococcus</taxon>
    </lineage>
</organism>
<comment type="function">
    <text evidence="1">Involved in the binding of tRNA to the ribosomes.</text>
</comment>
<comment type="subunit">
    <text evidence="1">Part of the 30S ribosomal subunit.</text>
</comment>
<comment type="similarity">
    <text evidence="1">Belongs to the universal ribosomal protein uS10 family.</text>
</comment>
<sequence length="102" mass="11612">MANKKIRIRLKAYEHRTLDTAAAKIVETATRTGAEVAGPIPLPTERSLYTIIRATHKYKDSREQFEMRTHKRLIDIINPTQKTVDALMKLDLPSGVNVEIKL</sequence>
<protein>
    <recommendedName>
        <fullName evidence="1">Small ribosomal subunit protein uS10</fullName>
    </recommendedName>
    <alternativeName>
        <fullName evidence="2">30S ribosomal protein S10</fullName>
    </alternativeName>
</protein>
<accession>A3CK62</accession>
<dbReference type="EMBL" id="CP000387">
    <property type="protein sequence ID" value="ABN43567.1"/>
    <property type="molecule type" value="Genomic_DNA"/>
</dbReference>
<dbReference type="RefSeq" id="WP_002894478.1">
    <property type="nucleotide sequence ID" value="NZ_CAXTYR010000005.1"/>
</dbReference>
<dbReference type="RefSeq" id="YP_001034117.1">
    <property type="nucleotide sequence ID" value="NC_009009.1"/>
</dbReference>
<dbReference type="SMR" id="A3CK62"/>
<dbReference type="STRING" id="388919.SSA_0106"/>
<dbReference type="GeneID" id="93964200"/>
<dbReference type="KEGG" id="ssa:SSA_0106"/>
<dbReference type="PATRIC" id="fig|388919.9.peg.99"/>
<dbReference type="eggNOG" id="COG0051">
    <property type="taxonomic scope" value="Bacteria"/>
</dbReference>
<dbReference type="HOGENOM" id="CLU_122625_1_3_9"/>
<dbReference type="OrthoDB" id="9804464at2"/>
<dbReference type="PRO" id="PR:A3CK62"/>
<dbReference type="Proteomes" id="UP000002148">
    <property type="component" value="Chromosome"/>
</dbReference>
<dbReference type="GO" id="GO:1990904">
    <property type="term" value="C:ribonucleoprotein complex"/>
    <property type="evidence" value="ECO:0007669"/>
    <property type="project" value="UniProtKB-KW"/>
</dbReference>
<dbReference type="GO" id="GO:0005840">
    <property type="term" value="C:ribosome"/>
    <property type="evidence" value="ECO:0007669"/>
    <property type="project" value="UniProtKB-KW"/>
</dbReference>
<dbReference type="GO" id="GO:0003735">
    <property type="term" value="F:structural constituent of ribosome"/>
    <property type="evidence" value="ECO:0007669"/>
    <property type="project" value="InterPro"/>
</dbReference>
<dbReference type="GO" id="GO:0000049">
    <property type="term" value="F:tRNA binding"/>
    <property type="evidence" value="ECO:0007669"/>
    <property type="project" value="UniProtKB-UniRule"/>
</dbReference>
<dbReference type="GO" id="GO:0006412">
    <property type="term" value="P:translation"/>
    <property type="evidence" value="ECO:0007669"/>
    <property type="project" value="UniProtKB-UniRule"/>
</dbReference>
<dbReference type="FunFam" id="3.30.70.600:FF:000001">
    <property type="entry name" value="30S ribosomal protein S10"/>
    <property type="match status" value="1"/>
</dbReference>
<dbReference type="Gene3D" id="3.30.70.600">
    <property type="entry name" value="Ribosomal protein S10 domain"/>
    <property type="match status" value="1"/>
</dbReference>
<dbReference type="HAMAP" id="MF_00508">
    <property type="entry name" value="Ribosomal_uS10"/>
    <property type="match status" value="1"/>
</dbReference>
<dbReference type="InterPro" id="IPR001848">
    <property type="entry name" value="Ribosomal_uS10"/>
</dbReference>
<dbReference type="InterPro" id="IPR018268">
    <property type="entry name" value="Ribosomal_uS10_CS"/>
</dbReference>
<dbReference type="InterPro" id="IPR027486">
    <property type="entry name" value="Ribosomal_uS10_dom"/>
</dbReference>
<dbReference type="InterPro" id="IPR036838">
    <property type="entry name" value="Ribosomal_uS10_dom_sf"/>
</dbReference>
<dbReference type="NCBIfam" id="NF001861">
    <property type="entry name" value="PRK00596.1"/>
    <property type="match status" value="1"/>
</dbReference>
<dbReference type="NCBIfam" id="TIGR01049">
    <property type="entry name" value="rpsJ_bact"/>
    <property type="match status" value="1"/>
</dbReference>
<dbReference type="PANTHER" id="PTHR11700">
    <property type="entry name" value="30S RIBOSOMAL PROTEIN S10 FAMILY MEMBER"/>
    <property type="match status" value="1"/>
</dbReference>
<dbReference type="Pfam" id="PF00338">
    <property type="entry name" value="Ribosomal_S10"/>
    <property type="match status" value="1"/>
</dbReference>
<dbReference type="PRINTS" id="PR00971">
    <property type="entry name" value="RIBOSOMALS10"/>
</dbReference>
<dbReference type="SMART" id="SM01403">
    <property type="entry name" value="Ribosomal_S10"/>
    <property type="match status" value="1"/>
</dbReference>
<dbReference type="SUPFAM" id="SSF54999">
    <property type="entry name" value="Ribosomal protein S10"/>
    <property type="match status" value="1"/>
</dbReference>
<dbReference type="PROSITE" id="PS00361">
    <property type="entry name" value="RIBOSOMAL_S10"/>
    <property type="match status" value="1"/>
</dbReference>